<protein>
    <recommendedName>
        <fullName evidence="1">3-deoxy-manno-octulosonate cytidylyltransferase</fullName>
        <ecNumber evidence="1">2.7.7.38</ecNumber>
    </recommendedName>
    <alternativeName>
        <fullName evidence="1">CMP-2-keto-3-deoxyoctulosonic acid synthase</fullName>
        <shortName evidence="1">CKS</shortName>
        <shortName evidence="1">CMP-KDO synthase</shortName>
    </alternativeName>
</protein>
<gene>
    <name evidence="1" type="primary">kdsB</name>
    <name type="ordered locus">LBJ_0338</name>
</gene>
<feature type="chain" id="PRO_0000370085" description="3-deoxy-manno-octulosonate cytidylyltransferase">
    <location>
        <begin position="1"/>
        <end position="246"/>
    </location>
</feature>
<keyword id="KW-0963">Cytoplasm</keyword>
<keyword id="KW-0448">Lipopolysaccharide biosynthesis</keyword>
<keyword id="KW-0548">Nucleotidyltransferase</keyword>
<keyword id="KW-0808">Transferase</keyword>
<name>KDSB_LEPBJ</name>
<organism>
    <name type="scientific">Leptospira borgpetersenii serovar Hardjo-bovis (strain JB197)</name>
    <dbReference type="NCBI Taxonomy" id="355277"/>
    <lineage>
        <taxon>Bacteria</taxon>
        <taxon>Pseudomonadati</taxon>
        <taxon>Spirochaetota</taxon>
        <taxon>Spirochaetia</taxon>
        <taxon>Leptospirales</taxon>
        <taxon>Leptospiraceae</taxon>
        <taxon>Leptospira</taxon>
    </lineage>
</organism>
<proteinExistence type="inferred from homology"/>
<comment type="function">
    <text evidence="1">Activates KDO (a required 8-carbon sugar) for incorporation into bacterial lipopolysaccharide in Gram-negative bacteria.</text>
</comment>
<comment type="catalytic activity">
    <reaction evidence="1">
        <text>3-deoxy-alpha-D-manno-oct-2-ulosonate + CTP = CMP-3-deoxy-beta-D-manno-octulosonate + diphosphate</text>
        <dbReference type="Rhea" id="RHEA:23448"/>
        <dbReference type="ChEBI" id="CHEBI:33019"/>
        <dbReference type="ChEBI" id="CHEBI:37563"/>
        <dbReference type="ChEBI" id="CHEBI:85986"/>
        <dbReference type="ChEBI" id="CHEBI:85987"/>
        <dbReference type="EC" id="2.7.7.38"/>
    </reaction>
</comment>
<comment type="pathway">
    <text evidence="1">Nucleotide-sugar biosynthesis; CMP-3-deoxy-D-manno-octulosonate biosynthesis; CMP-3-deoxy-D-manno-octulosonate from 3-deoxy-D-manno-octulosonate and CTP: step 1/1.</text>
</comment>
<comment type="pathway">
    <text evidence="1">Bacterial outer membrane biogenesis; lipopolysaccharide biosynthesis.</text>
</comment>
<comment type="subcellular location">
    <subcellularLocation>
        <location evidence="1">Cytoplasm</location>
    </subcellularLocation>
</comment>
<comment type="similarity">
    <text evidence="1">Belongs to the KdsB family.</text>
</comment>
<sequence length="246" mass="27384">MVKILGVIPARYASSRFPGKPLVKIGDKTMIEWTYRNASRSTALSELVVATDDTRIHEVVQGFGGNSVMTRADHISGTDRIIEVANLFSEYSIIINIQGDEPGIEPELIDGVAGLKASHPEWKMSTAAVPLIDFSHGEDPNRVKVIIDRNGKAIYFSRSLIPSQFKQTVPLYRHLGIYGYDRDFLLKYNSLPKSNLEESESLEQLRAIEAGYGIGVYLAQEAGLSVDTPADLEVVIEDFKKRKWIT</sequence>
<accession>Q04VK9</accession>
<dbReference type="EC" id="2.7.7.38" evidence="1"/>
<dbReference type="EMBL" id="CP000350">
    <property type="protein sequence ID" value="ABJ75061.1"/>
    <property type="molecule type" value="Genomic_DNA"/>
</dbReference>
<dbReference type="RefSeq" id="WP_011671011.1">
    <property type="nucleotide sequence ID" value="NC_008510.1"/>
</dbReference>
<dbReference type="SMR" id="Q04VK9"/>
<dbReference type="KEGG" id="lbj:LBJ_0338"/>
<dbReference type="HOGENOM" id="CLU_065038_0_1_12"/>
<dbReference type="UniPathway" id="UPA00030"/>
<dbReference type="UniPathway" id="UPA00358">
    <property type="reaction ID" value="UER00476"/>
</dbReference>
<dbReference type="Proteomes" id="UP000000656">
    <property type="component" value="Chromosome 1"/>
</dbReference>
<dbReference type="GO" id="GO:0005829">
    <property type="term" value="C:cytosol"/>
    <property type="evidence" value="ECO:0007669"/>
    <property type="project" value="TreeGrafter"/>
</dbReference>
<dbReference type="GO" id="GO:0008690">
    <property type="term" value="F:3-deoxy-manno-octulosonate cytidylyltransferase activity"/>
    <property type="evidence" value="ECO:0007669"/>
    <property type="project" value="UniProtKB-UniRule"/>
</dbReference>
<dbReference type="GO" id="GO:0033468">
    <property type="term" value="P:CMP-keto-3-deoxy-D-manno-octulosonic acid biosynthetic process"/>
    <property type="evidence" value="ECO:0007669"/>
    <property type="project" value="UniProtKB-UniRule"/>
</dbReference>
<dbReference type="GO" id="GO:0009103">
    <property type="term" value="P:lipopolysaccharide biosynthetic process"/>
    <property type="evidence" value="ECO:0007669"/>
    <property type="project" value="UniProtKB-UniRule"/>
</dbReference>
<dbReference type="CDD" id="cd02517">
    <property type="entry name" value="CMP-KDO-Synthetase"/>
    <property type="match status" value="1"/>
</dbReference>
<dbReference type="FunFam" id="3.90.550.10:FF:000011">
    <property type="entry name" value="3-deoxy-manno-octulosonate cytidylyltransferase"/>
    <property type="match status" value="1"/>
</dbReference>
<dbReference type="Gene3D" id="3.90.550.10">
    <property type="entry name" value="Spore Coat Polysaccharide Biosynthesis Protein SpsA, Chain A"/>
    <property type="match status" value="1"/>
</dbReference>
<dbReference type="HAMAP" id="MF_00057">
    <property type="entry name" value="KdsB"/>
    <property type="match status" value="1"/>
</dbReference>
<dbReference type="InterPro" id="IPR003329">
    <property type="entry name" value="Cytidylyl_trans"/>
</dbReference>
<dbReference type="InterPro" id="IPR004528">
    <property type="entry name" value="KdsB"/>
</dbReference>
<dbReference type="InterPro" id="IPR029044">
    <property type="entry name" value="Nucleotide-diphossugar_trans"/>
</dbReference>
<dbReference type="NCBIfam" id="TIGR00466">
    <property type="entry name" value="kdsB"/>
    <property type="match status" value="1"/>
</dbReference>
<dbReference type="NCBIfam" id="NF003950">
    <property type="entry name" value="PRK05450.1-3"/>
    <property type="match status" value="1"/>
</dbReference>
<dbReference type="NCBIfam" id="NF003952">
    <property type="entry name" value="PRK05450.1-5"/>
    <property type="match status" value="1"/>
</dbReference>
<dbReference type="NCBIfam" id="NF009905">
    <property type="entry name" value="PRK13368.1"/>
    <property type="match status" value="1"/>
</dbReference>
<dbReference type="PANTHER" id="PTHR42866">
    <property type="entry name" value="3-DEOXY-MANNO-OCTULOSONATE CYTIDYLYLTRANSFERASE"/>
    <property type="match status" value="1"/>
</dbReference>
<dbReference type="PANTHER" id="PTHR42866:SF2">
    <property type="entry name" value="3-DEOXY-MANNO-OCTULOSONATE CYTIDYLYLTRANSFERASE, MITOCHONDRIAL"/>
    <property type="match status" value="1"/>
</dbReference>
<dbReference type="Pfam" id="PF02348">
    <property type="entry name" value="CTP_transf_3"/>
    <property type="match status" value="1"/>
</dbReference>
<dbReference type="SUPFAM" id="SSF53448">
    <property type="entry name" value="Nucleotide-diphospho-sugar transferases"/>
    <property type="match status" value="1"/>
</dbReference>
<evidence type="ECO:0000255" key="1">
    <source>
        <dbReference type="HAMAP-Rule" id="MF_00057"/>
    </source>
</evidence>
<reference key="1">
    <citation type="journal article" date="2006" name="Proc. Natl. Acad. Sci. U.S.A.">
        <title>Genome reduction in Leptospira borgpetersenii reflects limited transmission potential.</title>
        <authorList>
            <person name="Bulach D.M."/>
            <person name="Zuerner R.L."/>
            <person name="Wilson P."/>
            <person name="Seemann T."/>
            <person name="McGrath A."/>
            <person name="Cullen P.A."/>
            <person name="Davis J."/>
            <person name="Johnson M."/>
            <person name="Kuczek E."/>
            <person name="Alt D.P."/>
            <person name="Peterson-Burch B."/>
            <person name="Coppel R.L."/>
            <person name="Rood J.I."/>
            <person name="Davies J.K."/>
            <person name="Adler B."/>
        </authorList>
    </citation>
    <scope>NUCLEOTIDE SEQUENCE [LARGE SCALE GENOMIC DNA]</scope>
    <source>
        <strain>JB197</strain>
    </source>
</reference>